<keyword id="KW-0067">ATP-binding</keyword>
<keyword id="KW-0460">Magnesium</keyword>
<keyword id="KW-0479">Metal-binding</keyword>
<keyword id="KW-0547">Nucleotide-binding</keyword>
<keyword id="KW-0548">Nucleotidyltransferase</keyword>
<keyword id="KW-0692">RNA repair</keyword>
<keyword id="KW-0694">RNA-binding</keyword>
<keyword id="KW-0808">Transferase</keyword>
<keyword id="KW-0819">tRNA processing</keyword>
<reference key="1">
    <citation type="journal article" date="2007" name="PLoS ONE">
        <title>A glimpse of streptococcal toxic shock syndrome from comparative genomics of S. suis 2 Chinese isolates.</title>
        <authorList>
            <person name="Chen C."/>
            <person name="Tang J."/>
            <person name="Dong W."/>
            <person name="Wang C."/>
            <person name="Feng Y."/>
            <person name="Wang J."/>
            <person name="Zheng F."/>
            <person name="Pan X."/>
            <person name="Liu D."/>
            <person name="Li M."/>
            <person name="Song Y."/>
            <person name="Zhu X."/>
            <person name="Sun H."/>
            <person name="Feng T."/>
            <person name="Guo Z."/>
            <person name="Ju A."/>
            <person name="Ge J."/>
            <person name="Dong Y."/>
            <person name="Sun W."/>
            <person name="Jiang Y."/>
            <person name="Wang J."/>
            <person name="Yan J."/>
            <person name="Yang H."/>
            <person name="Wang X."/>
            <person name="Gao G.F."/>
            <person name="Yang R."/>
            <person name="Wang J."/>
            <person name="Yu J."/>
        </authorList>
    </citation>
    <scope>NUCLEOTIDE SEQUENCE [LARGE SCALE GENOMIC DNA]</scope>
    <source>
        <strain>98HAH33</strain>
    </source>
</reference>
<comment type="function">
    <text evidence="1">Catalyzes the addition and repair of the essential 3'-terminal CCA sequence in tRNAs without using a nucleic acid template. Adds these three nucleotides in the order of C, C, and A to the tRNA nucleotide-73, using CTP and ATP as substrates and producing inorganic pyrophosphate. tRNA 3'-terminal CCA addition is required both for tRNA processing and repair. Also involved in tRNA surveillance by mediating tandem CCA addition to generate a CCACCA at the 3' terminus of unstable tRNAs. While stable tRNAs receive only 3'-terminal CCA, unstable tRNAs are marked with CCACCA and rapidly degraded.</text>
</comment>
<comment type="catalytic activity">
    <reaction evidence="1">
        <text>a tRNA precursor + 2 CTP + ATP = a tRNA with a 3' CCA end + 3 diphosphate</text>
        <dbReference type="Rhea" id="RHEA:14433"/>
        <dbReference type="Rhea" id="RHEA-COMP:10465"/>
        <dbReference type="Rhea" id="RHEA-COMP:10468"/>
        <dbReference type="ChEBI" id="CHEBI:30616"/>
        <dbReference type="ChEBI" id="CHEBI:33019"/>
        <dbReference type="ChEBI" id="CHEBI:37563"/>
        <dbReference type="ChEBI" id="CHEBI:74896"/>
        <dbReference type="ChEBI" id="CHEBI:83071"/>
        <dbReference type="EC" id="2.7.7.72"/>
    </reaction>
</comment>
<comment type="catalytic activity">
    <reaction evidence="1">
        <text>a tRNA with a 3' CCA end + 2 CTP + ATP = a tRNA with a 3' CCACCA end + 3 diphosphate</text>
        <dbReference type="Rhea" id="RHEA:76235"/>
        <dbReference type="Rhea" id="RHEA-COMP:10468"/>
        <dbReference type="Rhea" id="RHEA-COMP:18655"/>
        <dbReference type="ChEBI" id="CHEBI:30616"/>
        <dbReference type="ChEBI" id="CHEBI:33019"/>
        <dbReference type="ChEBI" id="CHEBI:37563"/>
        <dbReference type="ChEBI" id="CHEBI:83071"/>
        <dbReference type="ChEBI" id="CHEBI:195187"/>
    </reaction>
    <physiologicalReaction direction="left-to-right" evidence="1">
        <dbReference type="Rhea" id="RHEA:76236"/>
    </physiologicalReaction>
</comment>
<comment type="cofactor">
    <cofactor evidence="1">
        <name>Mg(2+)</name>
        <dbReference type="ChEBI" id="CHEBI:18420"/>
    </cofactor>
</comment>
<comment type="subunit">
    <text evidence="1">Homodimer.</text>
</comment>
<comment type="miscellaneous">
    <text evidence="1">A single active site specifically recognizes both ATP and CTP and is responsible for their addition.</text>
</comment>
<comment type="similarity">
    <text evidence="1">Belongs to the tRNA nucleotidyltransferase/poly(A) polymerase family. Bacterial CCA-adding enzyme type 3 subfamily.</text>
</comment>
<feature type="chain" id="PRO_1000054343" description="CCA-adding enzyme">
    <location>
        <begin position="1"/>
        <end position="403"/>
    </location>
</feature>
<feature type="binding site" evidence="1">
    <location>
        <position position="32"/>
    </location>
    <ligand>
        <name>ATP</name>
        <dbReference type="ChEBI" id="CHEBI:30616"/>
    </ligand>
</feature>
<feature type="binding site" evidence="1">
    <location>
        <position position="32"/>
    </location>
    <ligand>
        <name>CTP</name>
        <dbReference type="ChEBI" id="CHEBI:37563"/>
    </ligand>
</feature>
<feature type="binding site" evidence="1">
    <location>
        <position position="35"/>
    </location>
    <ligand>
        <name>ATP</name>
        <dbReference type="ChEBI" id="CHEBI:30616"/>
    </ligand>
</feature>
<feature type="binding site" evidence="1">
    <location>
        <position position="35"/>
    </location>
    <ligand>
        <name>CTP</name>
        <dbReference type="ChEBI" id="CHEBI:37563"/>
    </ligand>
</feature>
<feature type="binding site" evidence="1">
    <location>
        <position position="45"/>
    </location>
    <ligand>
        <name>Mg(2+)</name>
        <dbReference type="ChEBI" id="CHEBI:18420"/>
    </ligand>
</feature>
<feature type="binding site" evidence="1">
    <location>
        <position position="47"/>
    </location>
    <ligand>
        <name>Mg(2+)</name>
        <dbReference type="ChEBI" id="CHEBI:18420"/>
    </ligand>
</feature>
<feature type="binding site" evidence="1">
    <location>
        <position position="116"/>
    </location>
    <ligand>
        <name>ATP</name>
        <dbReference type="ChEBI" id="CHEBI:30616"/>
    </ligand>
</feature>
<feature type="binding site" evidence="1">
    <location>
        <position position="116"/>
    </location>
    <ligand>
        <name>CTP</name>
        <dbReference type="ChEBI" id="CHEBI:37563"/>
    </ligand>
</feature>
<feature type="binding site" evidence="1">
    <location>
        <position position="159"/>
    </location>
    <ligand>
        <name>ATP</name>
        <dbReference type="ChEBI" id="CHEBI:30616"/>
    </ligand>
</feature>
<feature type="binding site" evidence="1">
    <location>
        <position position="159"/>
    </location>
    <ligand>
        <name>CTP</name>
        <dbReference type="ChEBI" id="CHEBI:37563"/>
    </ligand>
</feature>
<feature type="binding site" evidence="1">
    <location>
        <position position="162"/>
    </location>
    <ligand>
        <name>ATP</name>
        <dbReference type="ChEBI" id="CHEBI:30616"/>
    </ligand>
</feature>
<feature type="binding site" evidence="1">
    <location>
        <position position="162"/>
    </location>
    <ligand>
        <name>CTP</name>
        <dbReference type="ChEBI" id="CHEBI:37563"/>
    </ligand>
</feature>
<feature type="binding site" evidence="1">
    <location>
        <position position="165"/>
    </location>
    <ligand>
        <name>ATP</name>
        <dbReference type="ChEBI" id="CHEBI:30616"/>
    </ligand>
</feature>
<feature type="binding site" evidence="1">
    <location>
        <position position="165"/>
    </location>
    <ligand>
        <name>CTP</name>
        <dbReference type="ChEBI" id="CHEBI:37563"/>
    </ligand>
</feature>
<feature type="binding site" evidence="1">
    <location>
        <position position="168"/>
    </location>
    <ligand>
        <name>ATP</name>
        <dbReference type="ChEBI" id="CHEBI:30616"/>
    </ligand>
</feature>
<feature type="binding site" evidence="1">
    <location>
        <position position="168"/>
    </location>
    <ligand>
        <name>CTP</name>
        <dbReference type="ChEBI" id="CHEBI:37563"/>
    </ligand>
</feature>
<organism>
    <name type="scientific">Streptococcus suis (strain 98HAH33)</name>
    <dbReference type="NCBI Taxonomy" id="391296"/>
    <lineage>
        <taxon>Bacteria</taxon>
        <taxon>Bacillati</taxon>
        <taxon>Bacillota</taxon>
        <taxon>Bacilli</taxon>
        <taxon>Lactobacillales</taxon>
        <taxon>Streptococcaceae</taxon>
        <taxon>Streptococcus</taxon>
    </lineage>
</organism>
<gene>
    <name evidence="1" type="primary">cca</name>
    <name type="ordered locus">SSU98_0829</name>
</gene>
<evidence type="ECO:0000255" key="1">
    <source>
        <dbReference type="HAMAP-Rule" id="MF_01263"/>
    </source>
</evidence>
<accession>A4W0U8</accession>
<sequence length="403" mass="46088">MKLNNLPSEFQEALPILEKIKAAGFEAYFVGGSVRDAILGRPIHDVDIATSSYPQETKQIFSRTIDVGIEHGTVLVLEGKKEYEITTFRTEEEYVDFRRPSQVSFVRSLEEDLKRRDFTVNAFALDEEAQIVDLFDGMTDLENRTLRAVGIPAERFNEDALRIMRGFRFAATLDFEIEPTTFEAMVQTAPLLEKISVERSFIEFDKLLMADFWRKGLRAMIDSKAYNFLPDLAGKSDELEAMLTSLTEEFRFSTSEQAWALLFVCLGIDNIKSFLKKWKTSNDFQRSVVKLVEIYQLRQAGPVTKQICFKYGKEFLYLVEELHQAQGFVTDFAAIDKIDQALTIHDKHEIVVNGGHLMKAFDLKPGPVLGELLKEVEFQIVEGQLENEEQAIMTFVKGILENE</sequence>
<name>CCA_STRS2</name>
<dbReference type="EC" id="2.7.7.72" evidence="1"/>
<dbReference type="EMBL" id="CP000408">
    <property type="protein sequence ID" value="ABP91987.1"/>
    <property type="molecule type" value="Genomic_DNA"/>
</dbReference>
<dbReference type="SMR" id="A4W0U8"/>
<dbReference type="KEGG" id="ssv:SSU98_0829"/>
<dbReference type="HOGENOM" id="CLU_015961_3_1_9"/>
<dbReference type="GO" id="GO:0005524">
    <property type="term" value="F:ATP binding"/>
    <property type="evidence" value="ECO:0007669"/>
    <property type="project" value="UniProtKB-UniRule"/>
</dbReference>
<dbReference type="GO" id="GO:0004810">
    <property type="term" value="F:CCA tRNA nucleotidyltransferase activity"/>
    <property type="evidence" value="ECO:0007669"/>
    <property type="project" value="UniProtKB-UniRule"/>
</dbReference>
<dbReference type="GO" id="GO:0000287">
    <property type="term" value="F:magnesium ion binding"/>
    <property type="evidence" value="ECO:0007669"/>
    <property type="project" value="UniProtKB-UniRule"/>
</dbReference>
<dbReference type="GO" id="GO:0000049">
    <property type="term" value="F:tRNA binding"/>
    <property type="evidence" value="ECO:0007669"/>
    <property type="project" value="UniProtKB-UniRule"/>
</dbReference>
<dbReference type="GO" id="GO:0042245">
    <property type="term" value="P:RNA repair"/>
    <property type="evidence" value="ECO:0007669"/>
    <property type="project" value="UniProtKB-KW"/>
</dbReference>
<dbReference type="GO" id="GO:0001680">
    <property type="term" value="P:tRNA 3'-terminal CCA addition"/>
    <property type="evidence" value="ECO:0007669"/>
    <property type="project" value="UniProtKB-UniRule"/>
</dbReference>
<dbReference type="CDD" id="cd05398">
    <property type="entry name" value="NT_ClassII-CCAase"/>
    <property type="match status" value="1"/>
</dbReference>
<dbReference type="Gene3D" id="1.10.110.30">
    <property type="match status" value="1"/>
</dbReference>
<dbReference type="Gene3D" id="1.10.246.80">
    <property type="match status" value="1"/>
</dbReference>
<dbReference type="Gene3D" id="1.20.58.560">
    <property type="match status" value="1"/>
</dbReference>
<dbReference type="Gene3D" id="3.30.460.10">
    <property type="entry name" value="Beta Polymerase, domain 2"/>
    <property type="match status" value="1"/>
</dbReference>
<dbReference type="HAMAP" id="MF_01263">
    <property type="entry name" value="CCA_bact_type3"/>
    <property type="match status" value="1"/>
</dbReference>
<dbReference type="InterPro" id="IPR050264">
    <property type="entry name" value="Bact_CCA-adding_enz_type3_sf"/>
</dbReference>
<dbReference type="InterPro" id="IPR032810">
    <property type="entry name" value="CCA-adding_enz_C"/>
</dbReference>
<dbReference type="InterPro" id="IPR023068">
    <property type="entry name" value="CCA-adding_enz_firmicutes"/>
</dbReference>
<dbReference type="InterPro" id="IPR043519">
    <property type="entry name" value="NT_sf"/>
</dbReference>
<dbReference type="InterPro" id="IPR002646">
    <property type="entry name" value="PolA_pol_head_dom"/>
</dbReference>
<dbReference type="InterPro" id="IPR032828">
    <property type="entry name" value="PolyA_RNA-bd"/>
</dbReference>
<dbReference type="NCBIfam" id="NF009814">
    <property type="entry name" value="PRK13299.1"/>
    <property type="match status" value="1"/>
</dbReference>
<dbReference type="PANTHER" id="PTHR46173">
    <property type="entry name" value="CCA TRNA NUCLEOTIDYLTRANSFERASE 1, MITOCHONDRIAL"/>
    <property type="match status" value="1"/>
</dbReference>
<dbReference type="PANTHER" id="PTHR46173:SF1">
    <property type="entry name" value="CCA TRNA NUCLEOTIDYLTRANSFERASE 1, MITOCHONDRIAL"/>
    <property type="match status" value="1"/>
</dbReference>
<dbReference type="Pfam" id="PF01743">
    <property type="entry name" value="PolyA_pol"/>
    <property type="match status" value="1"/>
</dbReference>
<dbReference type="Pfam" id="PF12627">
    <property type="entry name" value="PolyA_pol_RNAbd"/>
    <property type="match status" value="1"/>
</dbReference>
<dbReference type="Pfam" id="PF13735">
    <property type="entry name" value="tRNA_NucTran2_2"/>
    <property type="match status" value="1"/>
</dbReference>
<dbReference type="SUPFAM" id="SSF81301">
    <property type="entry name" value="Nucleotidyltransferase"/>
    <property type="match status" value="1"/>
</dbReference>
<dbReference type="SUPFAM" id="SSF81891">
    <property type="entry name" value="Poly A polymerase C-terminal region-like"/>
    <property type="match status" value="1"/>
</dbReference>
<protein>
    <recommendedName>
        <fullName evidence="1">CCA-adding enzyme</fullName>
        <ecNumber evidence="1">2.7.7.72</ecNumber>
    </recommendedName>
    <alternativeName>
        <fullName evidence="1">CCA tRNA nucleotidyltransferase</fullName>
    </alternativeName>
    <alternativeName>
        <fullName evidence="1">tRNA CCA-pyrophosphorylase</fullName>
    </alternativeName>
    <alternativeName>
        <fullName evidence="1">tRNA adenylyl-/cytidylyl- transferase</fullName>
    </alternativeName>
    <alternativeName>
        <fullName evidence="1">tRNA nucleotidyltransferase</fullName>
    </alternativeName>
    <alternativeName>
        <fullName evidence="1">tRNA-NT</fullName>
    </alternativeName>
</protein>
<proteinExistence type="inferred from homology"/>